<keyword id="KW-0012">Acyltransferase</keyword>
<keyword id="KW-0067">ATP-binding</keyword>
<keyword id="KW-0963">Cytoplasm</keyword>
<keyword id="KW-0408">Iron</keyword>
<keyword id="KW-0418">Kinase</keyword>
<keyword id="KW-0479">Metal-binding</keyword>
<keyword id="KW-0511">Multifunctional enzyme</keyword>
<keyword id="KW-0547">Nucleotide-binding</keyword>
<keyword id="KW-1185">Reference proteome</keyword>
<keyword id="KW-0723">Serine/threonine-protein kinase</keyword>
<keyword id="KW-0808">Transferase</keyword>
<keyword id="KW-0819">tRNA processing</keyword>
<dbReference type="EC" id="2.3.1.234" evidence="1"/>
<dbReference type="EC" id="2.7.11.1" evidence="1"/>
<dbReference type="EMBL" id="CP000559">
    <property type="protein sequence ID" value="ABN06826.1"/>
    <property type="molecule type" value="Genomic_DNA"/>
</dbReference>
<dbReference type="RefSeq" id="WP_011833027.1">
    <property type="nucleotide sequence ID" value="NC_008942.1"/>
</dbReference>
<dbReference type="SMR" id="A2SR70"/>
<dbReference type="STRING" id="410358.Mlab_0653"/>
<dbReference type="GeneID" id="4795757"/>
<dbReference type="KEGG" id="mla:Mlab_0653"/>
<dbReference type="eggNOG" id="arCOG01183">
    <property type="taxonomic scope" value="Archaea"/>
</dbReference>
<dbReference type="eggNOG" id="arCOG01185">
    <property type="taxonomic scope" value="Archaea"/>
</dbReference>
<dbReference type="HOGENOM" id="CLU_023208_2_2_2"/>
<dbReference type="OrthoDB" id="6818at2157"/>
<dbReference type="Proteomes" id="UP000000365">
    <property type="component" value="Chromosome"/>
</dbReference>
<dbReference type="GO" id="GO:0005737">
    <property type="term" value="C:cytoplasm"/>
    <property type="evidence" value="ECO:0007669"/>
    <property type="project" value="UniProtKB-SubCell"/>
</dbReference>
<dbReference type="GO" id="GO:0000408">
    <property type="term" value="C:EKC/KEOPS complex"/>
    <property type="evidence" value="ECO:0007669"/>
    <property type="project" value="InterPro"/>
</dbReference>
<dbReference type="GO" id="GO:0005524">
    <property type="term" value="F:ATP binding"/>
    <property type="evidence" value="ECO:0007669"/>
    <property type="project" value="UniProtKB-UniRule"/>
</dbReference>
<dbReference type="GO" id="GO:0005506">
    <property type="term" value="F:iron ion binding"/>
    <property type="evidence" value="ECO:0007669"/>
    <property type="project" value="UniProtKB-UniRule"/>
</dbReference>
<dbReference type="GO" id="GO:0004222">
    <property type="term" value="F:metalloendopeptidase activity"/>
    <property type="evidence" value="ECO:0007669"/>
    <property type="project" value="InterPro"/>
</dbReference>
<dbReference type="GO" id="GO:0061711">
    <property type="term" value="F:N(6)-L-threonylcarbamoyladenine synthase activity"/>
    <property type="evidence" value="ECO:0007669"/>
    <property type="project" value="UniProtKB-EC"/>
</dbReference>
<dbReference type="GO" id="GO:0106310">
    <property type="term" value="F:protein serine kinase activity"/>
    <property type="evidence" value="ECO:0007669"/>
    <property type="project" value="RHEA"/>
</dbReference>
<dbReference type="GO" id="GO:0004674">
    <property type="term" value="F:protein serine/threonine kinase activity"/>
    <property type="evidence" value="ECO:0007669"/>
    <property type="project" value="UniProtKB-KW"/>
</dbReference>
<dbReference type="GO" id="GO:0004712">
    <property type="term" value="F:protein serine/threonine/tyrosine kinase activity"/>
    <property type="evidence" value="ECO:0007669"/>
    <property type="project" value="UniProtKB-UniRule"/>
</dbReference>
<dbReference type="GO" id="GO:0008270">
    <property type="term" value="F:zinc ion binding"/>
    <property type="evidence" value="ECO:0007669"/>
    <property type="project" value="InterPro"/>
</dbReference>
<dbReference type="GO" id="GO:0002949">
    <property type="term" value="P:tRNA threonylcarbamoyladenosine modification"/>
    <property type="evidence" value="ECO:0007669"/>
    <property type="project" value="UniProtKB-UniRule"/>
</dbReference>
<dbReference type="CDD" id="cd24131">
    <property type="entry name" value="ASKHA_NBD_Kae1_arch_bac"/>
    <property type="match status" value="1"/>
</dbReference>
<dbReference type="FunFam" id="3.30.420.40:FF:000038">
    <property type="entry name" value="Probable tRNA N6-adenosine threonylcarbamoyltransferase"/>
    <property type="match status" value="1"/>
</dbReference>
<dbReference type="Gene3D" id="3.30.420.40">
    <property type="match status" value="2"/>
</dbReference>
<dbReference type="Gene3D" id="3.30.200.20">
    <property type="entry name" value="Phosphorylase Kinase, domain 1"/>
    <property type="match status" value="1"/>
</dbReference>
<dbReference type="Gene3D" id="1.10.510.10">
    <property type="entry name" value="Transferase(Phosphotransferase) domain 1"/>
    <property type="match status" value="1"/>
</dbReference>
<dbReference type="HAMAP" id="MF_01446">
    <property type="entry name" value="Kae1"/>
    <property type="match status" value="1"/>
</dbReference>
<dbReference type="HAMAP" id="MF_01447">
    <property type="entry name" value="Kae1_Bud32_arch"/>
    <property type="match status" value="1"/>
</dbReference>
<dbReference type="InterPro" id="IPR043129">
    <property type="entry name" value="ATPase_NBD"/>
</dbReference>
<dbReference type="InterPro" id="IPR022495">
    <property type="entry name" value="Bud32"/>
</dbReference>
<dbReference type="InterPro" id="IPR000905">
    <property type="entry name" value="Gcp-like_dom"/>
</dbReference>
<dbReference type="InterPro" id="IPR017861">
    <property type="entry name" value="KAE1/TsaD"/>
</dbReference>
<dbReference type="InterPro" id="IPR034680">
    <property type="entry name" value="Kae1_archaea_euk"/>
</dbReference>
<dbReference type="InterPro" id="IPR011009">
    <property type="entry name" value="Kinase-like_dom_sf"/>
</dbReference>
<dbReference type="InterPro" id="IPR017860">
    <property type="entry name" value="Peptidase_M22_CS"/>
</dbReference>
<dbReference type="InterPro" id="IPR018934">
    <property type="entry name" value="RIO_dom"/>
</dbReference>
<dbReference type="InterPro" id="IPR009220">
    <property type="entry name" value="tRNA_threonyl_synthase/kinase"/>
</dbReference>
<dbReference type="NCBIfam" id="TIGR03724">
    <property type="entry name" value="arch_bud32"/>
    <property type="match status" value="1"/>
</dbReference>
<dbReference type="NCBIfam" id="TIGR03722">
    <property type="entry name" value="arch_KAE1"/>
    <property type="match status" value="1"/>
</dbReference>
<dbReference type="NCBIfam" id="TIGR00329">
    <property type="entry name" value="gcp_kae1"/>
    <property type="match status" value="1"/>
</dbReference>
<dbReference type="NCBIfam" id="NF007174">
    <property type="entry name" value="PRK09605.1"/>
    <property type="match status" value="1"/>
</dbReference>
<dbReference type="NCBIfam" id="NF011462">
    <property type="entry name" value="PRK14879.1-3"/>
    <property type="match status" value="1"/>
</dbReference>
<dbReference type="PANTHER" id="PTHR11735">
    <property type="entry name" value="TRNA N6-ADENOSINE THREONYLCARBAMOYLTRANSFERASE"/>
    <property type="match status" value="1"/>
</dbReference>
<dbReference type="PANTHER" id="PTHR11735:SF14">
    <property type="entry name" value="TRNA N6-ADENOSINE THREONYLCARBAMOYLTRANSFERASE"/>
    <property type="match status" value="1"/>
</dbReference>
<dbReference type="Pfam" id="PF01163">
    <property type="entry name" value="RIO1"/>
    <property type="match status" value="1"/>
</dbReference>
<dbReference type="Pfam" id="PF00814">
    <property type="entry name" value="TsaD"/>
    <property type="match status" value="1"/>
</dbReference>
<dbReference type="PIRSF" id="PIRSF036401">
    <property type="entry name" value="Gcp_STYKS"/>
    <property type="match status" value="1"/>
</dbReference>
<dbReference type="PRINTS" id="PR00789">
    <property type="entry name" value="OSIALOPTASE"/>
</dbReference>
<dbReference type="SUPFAM" id="SSF53067">
    <property type="entry name" value="Actin-like ATPase domain"/>
    <property type="match status" value="1"/>
</dbReference>
<dbReference type="SUPFAM" id="SSF56112">
    <property type="entry name" value="Protein kinase-like (PK-like)"/>
    <property type="match status" value="1"/>
</dbReference>
<dbReference type="PROSITE" id="PS01016">
    <property type="entry name" value="GLYCOPROTEASE"/>
    <property type="match status" value="1"/>
</dbReference>
<reference key="1">
    <citation type="journal article" date="2009" name="Stand. Genomic Sci.">
        <title>Complete genome sequence of Methanocorpusculum labreanum type strain Z.</title>
        <authorList>
            <person name="Anderson I.J."/>
            <person name="Sieprawska-Lupa M."/>
            <person name="Goltsman E."/>
            <person name="Lapidus A."/>
            <person name="Copeland A."/>
            <person name="Glavina Del Rio T."/>
            <person name="Tice H."/>
            <person name="Dalin E."/>
            <person name="Barry K."/>
            <person name="Pitluck S."/>
            <person name="Hauser L."/>
            <person name="Land M."/>
            <person name="Lucas S."/>
            <person name="Richardson P."/>
            <person name="Whitman W.B."/>
            <person name="Kyrpides N.C."/>
        </authorList>
    </citation>
    <scope>NUCLEOTIDE SEQUENCE [LARGE SCALE GENOMIC DNA]</scope>
    <source>
        <strain>ATCC 43576 / DSM 4855 / Z</strain>
    </source>
</reference>
<gene>
    <name type="ordered locus">Mlab_0653</name>
</gene>
<organism>
    <name type="scientific">Methanocorpusculum labreanum (strain ATCC 43576 / DSM 4855 / Z)</name>
    <dbReference type="NCBI Taxonomy" id="410358"/>
    <lineage>
        <taxon>Archaea</taxon>
        <taxon>Methanobacteriati</taxon>
        <taxon>Methanobacteriota</taxon>
        <taxon>Stenosarchaea group</taxon>
        <taxon>Methanomicrobia</taxon>
        <taxon>Methanomicrobiales</taxon>
        <taxon>Methanocorpusculaceae</taxon>
        <taxon>Methanocorpusculum</taxon>
    </lineage>
</organism>
<proteinExistence type="inferred from homology"/>
<evidence type="ECO:0000255" key="1">
    <source>
        <dbReference type="HAMAP-Rule" id="MF_01447"/>
    </source>
</evidence>
<accession>A2SR70</accession>
<comment type="function">
    <text evidence="1">Required for the formation of a threonylcarbamoyl group on adenosine at position 37 (t(6)A37) in tRNAs that read codons beginning with adenine. Is a component of the KEOPS complex that is probably involved in the transfer of the threonylcarbamoyl moiety of threonylcarbamoyl-AMP (TC-AMP) to the N6 group of A37. The Kae1 domain likely plays a direct catalytic role in this reaction. The Bud32 domain probably displays kinase activity that regulates Kae1 function.</text>
</comment>
<comment type="catalytic activity">
    <reaction evidence="1">
        <text>L-seryl-[protein] + ATP = O-phospho-L-seryl-[protein] + ADP + H(+)</text>
        <dbReference type="Rhea" id="RHEA:17989"/>
        <dbReference type="Rhea" id="RHEA-COMP:9863"/>
        <dbReference type="Rhea" id="RHEA-COMP:11604"/>
        <dbReference type="ChEBI" id="CHEBI:15378"/>
        <dbReference type="ChEBI" id="CHEBI:29999"/>
        <dbReference type="ChEBI" id="CHEBI:30616"/>
        <dbReference type="ChEBI" id="CHEBI:83421"/>
        <dbReference type="ChEBI" id="CHEBI:456216"/>
        <dbReference type="EC" id="2.7.11.1"/>
    </reaction>
</comment>
<comment type="catalytic activity">
    <reaction evidence="1">
        <text>L-threonyl-[protein] + ATP = O-phospho-L-threonyl-[protein] + ADP + H(+)</text>
        <dbReference type="Rhea" id="RHEA:46608"/>
        <dbReference type="Rhea" id="RHEA-COMP:11060"/>
        <dbReference type="Rhea" id="RHEA-COMP:11605"/>
        <dbReference type="ChEBI" id="CHEBI:15378"/>
        <dbReference type="ChEBI" id="CHEBI:30013"/>
        <dbReference type="ChEBI" id="CHEBI:30616"/>
        <dbReference type="ChEBI" id="CHEBI:61977"/>
        <dbReference type="ChEBI" id="CHEBI:456216"/>
        <dbReference type="EC" id="2.7.11.1"/>
    </reaction>
</comment>
<comment type="catalytic activity">
    <reaction evidence="1">
        <text>L-threonylcarbamoyladenylate + adenosine(37) in tRNA = N(6)-L-threonylcarbamoyladenosine(37) in tRNA + AMP + H(+)</text>
        <dbReference type="Rhea" id="RHEA:37059"/>
        <dbReference type="Rhea" id="RHEA-COMP:10162"/>
        <dbReference type="Rhea" id="RHEA-COMP:10163"/>
        <dbReference type="ChEBI" id="CHEBI:15378"/>
        <dbReference type="ChEBI" id="CHEBI:73682"/>
        <dbReference type="ChEBI" id="CHEBI:74411"/>
        <dbReference type="ChEBI" id="CHEBI:74418"/>
        <dbReference type="ChEBI" id="CHEBI:456215"/>
        <dbReference type="EC" id="2.3.1.234"/>
    </reaction>
</comment>
<comment type="cofactor">
    <cofactor evidence="1">
        <name>Fe(2+)</name>
        <dbReference type="ChEBI" id="CHEBI:29033"/>
    </cofactor>
    <text evidence="1">Binds 1 Fe(2+) ion per subunit.</text>
</comment>
<comment type="subunit">
    <text evidence="1">Component of the KEOPS complex that consists of Kae1, Bud32, Cgi121 and Pcc1; the whole complex dimerizes.</text>
</comment>
<comment type="subcellular location">
    <subcellularLocation>
        <location evidence="1">Cytoplasm</location>
    </subcellularLocation>
</comment>
<comment type="similarity">
    <text evidence="1">In the N-terminal section; belongs to the KAE1 / TsaD family.</text>
</comment>
<comment type="similarity">
    <text evidence="1">In the C-terminal section; belongs to the protein kinase superfamily. Tyr protein kinase family. BUD32 subfamily.</text>
</comment>
<feature type="chain" id="PRO_0000303652" description="Probable bifunctional tRNA threonylcarbamoyladenosine biosynthesis protein">
    <location>
        <begin position="1"/>
        <end position="525"/>
    </location>
</feature>
<feature type="domain" description="Protein kinase" evidence="1">
    <location>
        <begin position="331"/>
        <end position="525"/>
    </location>
</feature>
<feature type="region of interest" description="Kae1">
    <location>
        <begin position="1"/>
        <end position="322"/>
    </location>
</feature>
<feature type="active site" description="Proton acceptor; for kinase activity" evidence="1">
    <location>
        <position position="442"/>
    </location>
</feature>
<feature type="binding site" evidence="1">
    <location>
        <position position="106"/>
    </location>
    <ligand>
        <name>Fe cation</name>
        <dbReference type="ChEBI" id="CHEBI:24875"/>
    </ligand>
</feature>
<feature type="binding site" evidence="1">
    <location>
        <position position="110"/>
    </location>
    <ligand>
        <name>Fe cation</name>
        <dbReference type="ChEBI" id="CHEBI:24875"/>
    </ligand>
</feature>
<feature type="binding site" evidence="1">
    <location>
        <begin position="127"/>
        <end position="131"/>
    </location>
    <ligand>
        <name>L-threonylcarbamoyladenylate</name>
        <dbReference type="ChEBI" id="CHEBI:73682"/>
    </ligand>
</feature>
<feature type="binding site" evidence="1">
    <location>
        <position position="127"/>
    </location>
    <ligand>
        <name>Fe cation</name>
        <dbReference type="ChEBI" id="CHEBI:24875"/>
    </ligand>
</feature>
<feature type="binding site" evidence="1">
    <location>
        <position position="159"/>
    </location>
    <ligand>
        <name>L-threonylcarbamoyladenylate</name>
        <dbReference type="ChEBI" id="CHEBI:73682"/>
    </ligand>
</feature>
<feature type="binding site" evidence="1">
    <location>
        <position position="172"/>
    </location>
    <ligand>
        <name>L-threonylcarbamoyladenylate</name>
        <dbReference type="ChEBI" id="CHEBI:73682"/>
    </ligand>
</feature>
<feature type="binding site" evidence="1">
    <location>
        <position position="176"/>
    </location>
    <ligand>
        <name>L-threonylcarbamoyladenylate</name>
        <dbReference type="ChEBI" id="CHEBI:73682"/>
    </ligand>
</feature>
<feature type="binding site" evidence="1">
    <location>
        <position position="255"/>
    </location>
    <ligand>
        <name>L-threonylcarbamoyladenylate</name>
        <dbReference type="ChEBI" id="CHEBI:73682"/>
    </ligand>
</feature>
<feature type="binding site" evidence="1">
    <location>
        <position position="283"/>
    </location>
    <ligand>
        <name>Fe cation</name>
        <dbReference type="ChEBI" id="CHEBI:24875"/>
    </ligand>
</feature>
<feature type="binding site" evidence="1">
    <location>
        <begin position="338"/>
        <end position="346"/>
    </location>
    <ligand>
        <name>ATP</name>
        <dbReference type="ChEBI" id="CHEBI:30616"/>
    </ligand>
</feature>
<feature type="binding site" evidence="1">
    <location>
        <position position="355"/>
    </location>
    <ligand>
        <name>ATP</name>
        <dbReference type="ChEBI" id="CHEBI:30616"/>
    </ligand>
</feature>
<name>KAE1B_METLZ</name>
<protein>
    <recommendedName>
        <fullName evidence="1">Probable bifunctional tRNA threonylcarbamoyladenosine biosynthesis protein</fullName>
    </recommendedName>
    <domain>
        <recommendedName>
            <fullName evidence="1">tRNA N6-adenosine threonylcarbamoyltransferase</fullName>
            <ecNumber evidence="1">2.3.1.234</ecNumber>
        </recommendedName>
        <alternativeName>
            <fullName>N6-L-threonylcarbamoyladenine synthase</fullName>
            <shortName>t(6)A synthase</shortName>
        </alternativeName>
        <alternativeName>
            <fullName evidence="1">t(6)A37 threonylcarbamoyladenosine biosynthesis protein Kae1</fullName>
        </alternativeName>
        <alternativeName>
            <fullName evidence="1">tRNA threonylcarbamoyladenosine biosynthesis protein Kae1</fullName>
        </alternativeName>
    </domain>
    <domain>
        <recommendedName>
            <fullName evidence="1">Serine/threonine-protein kinase Bud32</fullName>
            <ecNumber evidence="1">2.7.11.1</ecNumber>
        </recommendedName>
    </domain>
</protein>
<sequence length="525" mass="57079">MPEKRVLGIEGTAWNFSAAVFAEDLVCLHSAPYVPPTGGIHPREAAQHHASVASDVIRKALDEAGEKIDAVAFSIGPGLGPSLRIAATTARTLALKLGVPLIGVNHCVAHVEIGRWYTKFADPIVLYASGANTQVLGFLNGKYRIFGETLDIGLGNALDKFARSHNLPHPGGPIIEKMAKDGSYIHLPYTVKGMDLAFSGLMSAAKEATQRGESMEDVCFSFQETAFAMCVEVTERALAHTGKDEVILVGGVGANARLQEMLAKMCEERGAKFMAPPRVYMGDNGAMIAYTGKIMLEAGSTIPIAESVVNPGFRSDQVEVTWRHDAGQLFAPGQSETAERGAEASVNLTDKDVVKTRLAKGYRVPELDRHLIAERTRAEARAISAARRGGVPVPVIRDVTDHEIVMEKLDGDVLKYVMNEEYAKGAGLTVGKLHKAGITHGDLTTSNMIWHNDRVYLIDFGLSQMTEEIEPRGVDLHVLFQTLESTTENPETLKSAFINGYCAAFSEAENVIRREHEIELRGRYL</sequence>